<accession>C4K4P2</accession>
<gene>
    <name evidence="1" type="primary">clpP</name>
    <name type="ordered locus">HDEF_0809</name>
</gene>
<sequence>MSSFDEQNTRLPSMTLVPMVVEQTSRGERAYDIYSRMLKERVIFLTGQVEEHMANLIVAQMLFLEAENPEKDIYLYINSPGGVITAGMSIYDTMQFITPDVSTICIGQACSMGAFLLAAGAKSKRYCLPNARVMIHQPLGGFQGQASDIEIHAKEILKVKKRMNDLMAIHTKKTLKIIEKDTERDHFLSAEEAKKYGLVDCVLTERKDVKNFSKK</sequence>
<organism>
    <name type="scientific">Hamiltonella defensa subsp. Acyrthosiphon pisum (strain 5AT)</name>
    <dbReference type="NCBI Taxonomy" id="572265"/>
    <lineage>
        <taxon>Bacteria</taxon>
        <taxon>Pseudomonadati</taxon>
        <taxon>Pseudomonadota</taxon>
        <taxon>Gammaproteobacteria</taxon>
        <taxon>Enterobacterales</taxon>
        <taxon>Enterobacteriaceae</taxon>
        <taxon>aphid secondary symbionts</taxon>
        <taxon>Candidatus Hamiltonella</taxon>
    </lineage>
</organism>
<proteinExistence type="inferred from homology"/>
<name>CLPP_HAMD5</name>
<protein>
    <recommendedName>
        <fullName evidence="1">ATP-dependent Clp protease proteolytic subunit</fullName>
        <ecNumber evidence="1">3.4.21.92</ecNumber>
    </recommendedName>
    <alternativeName>
        <fullName evidence="1">Endopeptidase Clp</fullName>
    </alternativeName>
</protein>
<evidence type="ECO:0000255" key="1">
    <source>
        <dbReference type="HAMAP-Rule" id="MF_00444"/>
    </source>
</evidence>
<comment type="function">
    <text evidence="1">Cleaves peptides in various proteins in a process that requires ATP hydrolysis. Has a chymotrypsin-like activity. Plays a major role in the degradation of misfolded proteins.</text>
</comment>
<comment type="catalytic activity">
    <reaction evidence="1">
        <text>Hydrolysis of proteins to small peptides in the presence of ATP and magnesium. alpha-casein is the usual test substrate. In the absence of ATP, only oligopeptides shorter than five residues are hydrolyzed (such as succinyl-Leu-Tyr-|-NHMec, and Leu-Tyr-Leu-|-Tyr-Trp, in which cleavage of the -Tyr-|-Leu- and -Tyr-|-Trp bonds also occurs).</text>
        <dbReference type="EC" id="3.4.21.92"/>
    </reaction>
</comment>
<comment type="subunit">
    <text evidence="1">Fourteen ClpP subunits assemble into 2 heptameric rings which stack back to back to give a disk-like structure with a central cavity, resembling the structure of eukaryotic proteasomes.</text>
</comment>
<comment type="subcellular location">
    <subcellularLocation>
        <location evidence="1">Cytoplasm</location>
    </subcellularLocation>
</comment>
<comment type="similarity">
    <text evidence="1">Belongs to the peptidase S14 family.</text>
</comment>
<keyword id="KW-0963">Cytoplasm</keyword>
<keyword id="KW-0378">Hydrolase</keyword>
<keyword id="KW-0645">Protease</keyword>
<keyword id="KW-0720">Serine protease</keyword>
<reference key="1">
    <citation type="journal article" date="2009" name="Proc. Natl. Acad. Sci. U.S.A.">
        <title>Hamiltonella defensa, genome evolution of protective bacterial endosymbiont from pathogenic ancestors.</title>
        <authorList>
            <person name="Degnan P.H."/>
            <person name="Yu Y."/>
            <person name="Sisneros N."/>
            <person name="Wing R.A."/>
            <person name="Moran N.A."/>
        </authorList>
    </citation>
    <scope>NUCLEOTIDE SEQUENCE [LARGE SCALE GENOMIC DNA]</scope>
    <source>
        <strain>5AT</strain>
    </source>
</reference>
<dbReference type="EC" id="3.4.21.92" evidence="1"/>
<dbReference type="EMBL" id="CP001277">
    <property type="protein sequence ID" value="ACQ67535.1"/>
    <property type="molecule type" value="Genomic_DNA"/>
</dbReference>
<dbReference type="RefSeq" id="WP_015873354.1">
    <property type="nucleotide sequence ID" value="NC_012751.1"/>
</dbReference>
<dbReference type="SMR" id="C4K4P2"/>
<dbReference type="STRING" id="572265.HDEF_0809"/>
<dbReference type="MEROPS" id="S14.001"/>
<dbReference type="GeneID" id="66260647"/>
<dbReference type="KEGG" id="hde:HDEF_0809"/>
<dbReference type="eggNOG" id="COG0740">
    <property type="taxonomic scope" value="Bacteria"/>
</dbReference>
<dbReference type="HOGENOM" id="CLU_058707_3_2_6"/>
<dbReference type="Proteomes" id="UP000002334">
    <property type="component" value="Chromosome"/>
</dbReference>
<dbReference type="GO" id="GO:0005737">
    <property type="term" value="C:cytoplasm"/>
    <property type="evidence" value="ECO:0007669"/>
    <property type="project" value="UniProtKB-SubCell"/>
</dbReference>
<dbReference type="GO" id="GO:0009368">
    <property type="term" value="C:endopeptidase Clp complex"/>
    <property type="evidence" value="ECO:0007669"/>
    <property type="project" value="TreeGrafter"/>
</dbReference>
<dbReference type="GO" id="GO:0004176">
    <property type="term" value="F:ATP-dependent peptidase activity"/>
    <property type="evidence" value="ECO:0007669"/>
    <property type="project" value="InterPro"/>
</dbReference>
<dbReference type="GO" id="GO:0051117">
    <property type="term" value="F:ATPase binding"/>
    <property type="evidence" value="ECO:0007669"/>
    <property type="project" value="TreeGrafter"/>
</dbReference>
<dbReference type="GO" id="GO:0004252">
    <property type="term" value="F:serine-type endopeptidase activity"/>
    <property type="evidence" value="ECO:0007669"/>
    <property type="project" value="UniProtKB-UniRule"/>
</dbReference>
<dbReference type="GO" id="GO:0006515">
    <property type="term" value="P:protein quality control for misfolded or incompletely synthesized proteins"/>
    <property type="evidence" value="ECO:0007669"/>
    <property type="project" value="TreeGrafter"/>
</dbReference>
<dbReference type="CDD" id="cd07017">
    <property type="entry name" value="S14_ClpP_2"/>
    <property type="match status" value="1"/>
</dbReference>
<dbReference type="FunFam" id="3.90.226.10:FF:000001">
    <property type="entry name" value="ATP-dependent Clp protease proteolytic subunit"/>
    <property type="match status" value="1"/>
</dbReference>
<dbReference type="Gene3D" id="3.90.226.10">
    <property type="entry name" value="2-enoyl-CoA Hydratase, Chain A, domain 1"/>
    <property type="match status" value="1"/>
</dbReference>
<dbReference type="HAMAP" id="MF_00444">
    <property type="entry name" value="ClpP"/>
    <property type="match status" value="1"/>
</dbReference>
<dbReference type="InterPro" id="IPR001907">
    <property type="entry name" value="ClpP"/>
</dbReference>
<dbReference type="InterPro" id="IPR029045">
    <property type="entry name" value="ClpP/crotonase-like_dom_sf"/>
</dbReference>
<dbReference type="InterPro" id="IPR023562">
    <property type="entry name" value="ClpP/TepA"/>
</dbReference>
<dbReference type="InterPro" id="IPR033135">
    <property type="entry name" value="ClpP_His_AS"/>
</dbReference>
<dbReference type="InterPro" id="IPR018215">
    <property type="entry name" value="ClpP_Ser_AS"/>
</dbReference>
<dbReference type="NCBIfam" id="TIGR00493">
    <property type="entry name" value="clpP"/>
    <property type="match status" value="1"/>
</dbReference>
<dbReference type="NCBIfam" id="NF001368">
    <property type="entry name" value="PRK00277.1"/>
    <property type="match status" value="1"/>
</dbReference>
<dbReference type="NCBIfam" id="NF009205">
    <property type="entry name" value="PRK12553.1"/>
    <property type="match status" value="1"/>
</dbReference>
<dbReference type="PANTHER" id="PTHR10381">
    <property type="entry name" value="ATP-DEPENDENT CLP PROTEASE PROTEOLYTIC SUBUNIT"/>
    <property type="match status" value="1"/>
</dbReference>
<dbReference type="PANTHER" id="PTHR10381:SF70">
    <property type="entry name" value="ATP-DEPENDENT CLP PROTEASE PROTEOLYTIC SUBUNIT"/>
    <property type="match status" value="1"/>
</dbReference>
<dbReference type="Pfam" id="PF00574">
    <property type="entry name" value="CLP_protease"/>
    <property type="match status" value="1"/>
</dbReference>
<dbReference type="PRINTS" id="PR00127">
    <property type="entry name" value="CLPPROTEASEP"/>
</dbReference>
<dbReference type="SUPFAM" id="SSF52096">
    <property type="entry name" value="ClpP/crotonase"/>
    <property type="match status" value="1"/>
</dbReference>
<dbReference type="PROSITE" id="PS00382">
    <property type="entry name" value="CLP_PROTEASE_HIS"/>
    <property type="match status" value="1"/>
</dbReference>
<dbReference type="PROSITE" id="PS00381">
    <property type="entry name" value="CLP_PROTEASE_SER"/>
    <property type="match status" value="1"/>
</dbReference>
<feature type="chain" id="PRO_1000206156" description="ATP-dependent Clp protease proteolytic subunit">
    <location>
        <begin position="1"/>
        <end position="215"/>
    </location>
</feature>
<feature type="active site" description="Nucleophile" evidence="1">
    <location>
        <position position="111"/>
    </location>
</feature>
<feature type="active site" evidence="1">
    <location>
        <position position="136"/>
    </location>
</feature>